<keyword id="KW-0240">DNA-directed RNA polymerase</keyword>
<keyword id="KW-0460">Magnesium</keyword>
<keyword id="KW-0479">Metal-binding</keyword>
<keyword id="KW-0548">Nucleotidyltransferase</keyword>
<keyword id="KW-0804">Transcription</keyword>
<keyword id="KW-0808">Transferase</keyword>
<keyword id="KW-0862">Zinc</keyword>
<proteinExistence type="inferred from homology"/>
<feature type="chain" id="PRO_0000353292" description="DNA-directed RNA polymerase subunit beta'">
    <location>
        <begin position="1"/>
        <end position="1204"/>
    </location>
</feature>
<feature type="binding site" evidence="1">
    <location>
        <position position="60"/>
    </location>
    <ligand>
        <name>Zn(2+)</name>
        <dbReference type="ChEBI" id="CHEBI:29105"/>
        <label>1</label>
    </ligand>
</feature>
<feature type="binding site" evidence="1">
    <location>
        <position position="62"/>
    </location>
    <ligand>
        <name>Zn(2+)</name>
        <dbReference type="ChEBI" id="CHEBI:29105"/>
        <label>1</label>
    </ligand>
</feature>
<feature type="binding site" evidence="1">
    <location>
        <position position="75"/>
    </location>
    <ligand>
        <name>Zn(2+)</name>
        <dbReference type="ChEBI" id="CHEBI:29105"/>
        <label>1</label>
    </ligand>
</feature>
<feature type="binding site" evidence="1">
    <location>
        <position position="78"/>
    </location>
    <ligand>
        <name>Zn(2+)</name>
        <dbReference type="ChEBI" id="CHEBI:29105"/>
        <label>1</label>
    </ligand>
</feature>
<feature type="binding site" evidence="1">
    <location>
        <position position="449"/>
    </location>
    <ligand>
        <name>Mg(2+)</name>
        <dbReference type="ChEBI" id="CHEBI:18420"/>
    </ligand>
</feature>
<feature type="binding site" evidence="1">
    <location>
        <position position="451"/>
    </location>
    <ligand>
        <name>Mg(2+)</name>
        <dbReference type="ChEBI" id="CHEBI:18420"/>
    </ligand>
</feature>
<feature type="binding site" evidence="1">
    <location>
        <position position="453"/>
    </location>
    <ligand>
        <name>Mg(2+)</name>
        <dbReference type="ChEBI" id="CHEBI:18420"/>
    </ligand>
</feature>
<feature type="binding site" evidence="1">
    <location>
        <position position="819"/>
    </location>
    <ligand>
        <name>Zn(2+)</name>
        <dbReference type="ChEBI" id="CHEBI:29105"/>
        <label>2</label>
    </ligand>
</feature>
<feature type="binding site" evidence="1">
    <location>
        <position position="893"/>
    </location>
    <ligand>
        <name>Zn(2+)</name>
        <dbReference type="ChEBI" id="CHEBI:29105"/>
        <label>2</label>
    </ligand>
</feature>
<feature type="binding site" evidence="1">
    <location>
        <position position="900"/>
    </location>
    <ligand>
        <name>Zn(2+)</name>
        <dbReference type="ChEBI" id="CHEBI:29105"/>
        <label>2</label>
    </ligand>
</feature>
<feature type="binding site" evidence="1">
    <location>
        <position position="903"/>
    </location>
    <ligand>
        <name>Zn(2+)</name>
        <dbReference type="ChEBI" id="CHEBI:29105"/>
        <label>2</label>
    </ligand>
</feature>
<dbReference type="EC" id="2.7.7.6" evidence="1"/>
<dbReference type="EMBL" id="CP000764">
    <property type="protein sequence ID" value="ABS20471.1"/>
    <property type="molecule type" value="Genomic_DNA"/>
</dbReference>
<dbReference type="RefSeq" id="WP_011983239.1">
    <property type="nucleotide sequence ID" value="NC_009674.1"/>
</dbReference>
<dbReference type="SMR" id="A7GK13"/>
<dbReference type="STRING" id="315749.Bcer98_0097"/>
<dbReference type="GeneID" id="33895418"/>
<dbReference type="KEGG" id="bcy:Bcer98_0097"/>
<dbReference type="eggNOG" id="COG0086">
    <property type="taxonomic scope" value="Bacteria"/>
</dbReference>
<dbReference type="HOGENOM" id="CLU_000524_3_0_9"/>
<dbReference type="OrthoDB" id="9815296at2"/>
<dbReference type="Proteomes" id="UP000002300">
    <property type="component" value="Chromosome"/>
</dbReference>
<dbReference type="GO" id="GO:0000428">
    <property type="term" value="C:DNA-directed RNA polymerase complex"/>
    <property type="evidence" value="ECO:0007669"/>
    <property type="project" value="UniProtKB-KW"/>
</dbReference>
<dbReference type="GO" id="GO:0003677">
    <property type="term" value="F:DNA binding"/>
    <property type="evidence" value="ECO:0007669"/>
    <property type="project" value="UniProtKB-UniRule"/>
</dbReference>
<dbReference type="GO" id="GO:0003899">
    <property type="term" value="F:DNA-directed RNA polymerase activity"/>
    <property type="evidence" value="ECO:0007669"/>
    <property type="project" value="UniProtKB-UniRule"/>
</dbReference>
<dbReference type="GO" id="GO:0000287">
    <property type="term" value="F:magnesium ion binding"/>
    <property type="evidence" value="ECO:0007669"/>
    <property type="project" value="UniProtKB-UniRule"/>
</dbReference>
<dbReference type="GO" id="GO:0008270">
    <property type="term" value="F:zinc ion binding"/>
    <property type="evidence" value="ECO:0007669"/>
    <property type="project" value="UniProtKB-UniRule"/>
</dbReference>
<dbReference type="GO" id="GO:0006351">
    <property type="term" value="P:DNA-templated transcription"/>
    <property type="evidence" value="ECO:0007669"/>
    <property type="project" value="UniProtKB-UniRule"/>
</dbReference>
<dbReference type="CDD" id="cd02655">
    <property type="entry name" value="RNAP_beta'_C"/>
    <property type="match status" value="1"/>
</dbReference>
<dbReference type="CDD" id="cd01609">
    <property type="entry name" value="RNAP_beta'_N"/>
    <property type="match status" value="1"/>
</dbReference>
<dbReference type="FunFam" id="1.10.132.30:FF:000003">
    <property type="entry name" value="DNA-directed RNA polymerase subunit beta"/>
    <property type="match status" value="1"/>
</dbReference>
<dbReference type="FunFam" id="1.10.150.390:FF:000002">
    <property type="entry name" value="DNA-directed RNA polymerase subunit beta"/>
    <property type="match status" value="1"/>
</dbReference>
<dbReference type="FunFam" id="1.10.40.90:FF:000001">
    <property type="entry name" value="DNA-directed RNA polymerase subunit beta"/>
    <property type="match status" value="1"/>
</dbReference>
<dbReference type="FunFam" id="4.10.860.120:FF:000001">
    <property type="entry name" value="DNA-directed RNA polymerase subunit beta"/>
    <property type="match status" value="1"/>
</dbReference>
<dbReference type="Gene3D" id="1.10.132.30">
    <property type="match status" value="1"/>
</dbReference>
<dbReference type="Gene3D" id="1.10.150.390">
    <property type="match status" value="1"/>
</dbReference>
<dbReference type="Gene3D" id="1.10.1790.20">
    <property type="match status" value="1"/>
</dbReference>
<dbReference type="Gene3D" id="1.10.40.90">
    <property type="match status" value="1"/>
</dbReference>
<dbReference type="Gene3D" id="2.40.40.20">
    <property type="match status" value="1"/>
</dbReference>
<dbReference type="Gene3D" id="2.40.50.100">
    <property type="match status" value="1"/>
</dbReference>
<dbReference type="Gene3D" id="4.10.860.120">
    <property type="entry name" value="RNA polymerase II, clamp domain"/>
    <property type="match status" value="1"/>
</dbReference>
<dbReference type="Gene3D" id="1.10.274.100">
    <property type="entry name" value="RNA polymerase Rpb1, domain 3"/>
    <property type="match status" value="1"/>
</dbReference>
<dbReference type="HAMAP" id="MF_01322">
    <property type="entry name" value="RNApol_bact_RpoC"/>
    <property type="match status" value="1"/>
</dbReference>
<dbReference type="InterPro" id="IPR045867">
    <property type="entry name" value="DNA-dir_RpoC_beta_prime"/>
</dbReference>
<dbReference type="InterPro" id="IPR012754">
    <property type="entry name" value="DNA-dir_RpoC_beta_prime_bact"/>
</dbReference>
<dbReference type="InterPro" id="IPR000722">
    <property type="entry name" value="RNA_pol_asu"/>
</dbReference>
<dbReference type="InterPro" id="IPR006592">
    <property type="entry name" value="RNA_pol_N"/>
</dbReference>
<dbReference type="InterPro" id="IPR007080">
    <property type="entry name" value="RNA_pol_Rpb1_1"/>
</dbReference>
<dbReference type="InterPro" id="IPR007066">
    <property type="entry name" value="RNA_pol_Rpb1_3"/>
</dbReference>
<dbReference type="InterPro" id="IPR042102">
    <property type="entry name" value="RNA_pol_Rpb1_3_sf"/>
</dbReference>
<dbReference type="InterPro" id="IPR007083">
    <property type="entry name" value="RNA_pol_Rpb1_4"/>
</dbReference>
<dbReference type="InterPro" id="IPR007081">
    <property type="entry name" value="RNA_pol_Rpb1_5"/>
</dbReference>
<dbReference type="InterPro" id="IPR044893">
    <property type="entry name" value="RNA_pol_Rpb1_clamp_domain"/>
</dbReference>
<dbReference type="InterPro" id="IPR038120">
    <property type="entry name" value="Rpb1_funnel_sf"/>
</dbReference>
<dbReference type="NCBIfam" id="TIGR02386">
    <property type="entry name" value="rpoC_TIGR"/>
    <property type="match status" value="1"/>
</dbReference>
<dbReference type="PANTHER" id="PTHR19376">
    <property type="entry name" value="DNA-DIRECTED RNA POLYMERASE"/>
    <property type="match status" value="1"/>
</dbReference>
<dbReference type="PANTHER" id="PTHR19376:SF54">
    <property type="entry name" value="DNA-DIRECTED RNA POLYMERASE SUBUNIT BETA"/>
    <property type="match status" value="1"/>
</dbReference>
<dbReference type="Pfam" id="PF04997">
    <property type="entry name" value="RNA_pol_Rpb1_1"/>
    <property type="match status" value="1"/>
</dbReference>
<dbReference type="Pfam" id="PF00623">
    <property type="entry name" value="RNA_pol_Rpb1_2"/>
    <property type="match status" value="2"/>
</dbReference>
<dbReference type="Pfam" id="PF04983">
    <property type="entry name" value="RNA_pol_Rpb1_3"/>
    <property type="match status" value="1"/>
</dbReference>
<dbReference type="Pfam" id="PF05000">
    <property type="entry name" value="RNA_pol_Rpb1_4"/>
    <property type="match status" value="1"/>
</dbReference>
<dbReference type="Pfam" id="PF04998">
    <property type="entry name" value="RNA_pol_Rpb1_5"/>
    <property type="match status" value="2"/>
</dbReference>
<dbReference type="SMART" id="SM00663">
    <property type="entry name" value="RPOLA_N"/>
    <property type="match status" value="1"/>
</dbReference>
<dbReference type="SUPFAM" id="SSF64484">
    <property type="entry name" value="beta and beta-prime subunits of DNA dependent RNA-polymerase"/>
    <property type="match status" value="1"/>
</dbReference>
<reference key="1">
    <citation type="journal article" date="2008" name="Chem. Biol. Interact.">
        <title>Extending the Bacillus cereus group genomics to putative food-borne pathogens of different toxicity.</title>
        <authorList>
            <person name="Lapidus A."/>
            <person name="Goltsman E."/>
            <person name="Auger S."/>
            <person name="Galleron N."/>
            <person name="Segurens B."/>
            <person name="Dossat C."/>
            <person name="Land M.L."/>
            <person name="Broussolle V."/>
            <person name="Brillard J."/>
            <person name="Guinebretiere M.-H."/>
            <person name="Sanchis V."/>
            <person name="Nguen-the C."/>
            <person name="Lereclus D."/>
            <person name="Richardson P."/>
            <person name="Wincker P."/>
            <person name="Weissenbach J."/>
            <person name="Ehrlich S.D."/>
            <person name="Sorokin A."/>
        </authorList>
    </citation>
    <scope>NUCLEOTIDE SEQUENCE [LARGE SCALE GENOMIC DNA]</scope>
    <source>
        <strain>DSM 22905 / CIP 110041 / 391-98 / NVH 391-98</strain>
    </source>
</reference>
<sequence length="1204" mass="134741">MIDVNNFEYMKIGLASPDKIRSWSYGEVKKPETINYRTLKPEKDGLFCERIFGPQKDWECHCGKYKRVRYKGVVCDRCGVEVTRAKVRRERMGHIELAAPVSHIWYFKGIPSRMGLVLDMSPRALEEVIYFASYVVTESGDTPLDKKQLLSEKEYRAYRDRYGNTFQAAMGAEAIKKLLQDIDLDKEVDFLKEELKTAQGQRRTRAIKRLEVLESFRNSGNKPSWMILDVLPVIPPELRPMVQLDGGRFATSDLNDLYRRVINRNNRLKRLLDLGAPSIIVQNEKRMLQEAVDALIDNGRRGRPVTGPGNRPLKSLSHMLKGKQGRFRQNLLGKRVDYSGRSVIVVGPNLKMYQCGLPKEMALELFKPFVMKELVEKGLAHNIKSAKRKIERVQPEVWDVLESVIKEHPVLLNRAPTLHRLGIQAFEPTLVEGRAIRLHPLVCTAYNADFDGDQMAVHVPLSSEAQAEARLLMLAAQNILNPKDGKPVVTPSQDMVLGNYYLTLERAGAIGEGMVFKDTNEALLAYQNGYVHLHTRIAVPASSVNNNETFTEEQKGKLLLTTVGKLIFNEILPKSFPYINEPTKSNLEKETPAKYFVDKGANIKEVIASREEVAPFNKKILGNIIAEVFKRFKITETSRMLDRMKDLGFKYSTKAGITVGVADILVLGEKDEILHEAQAKVDKVIKQFRRGLITEEERYDRVISIWSNAKDVIQGKLMKSLDKRNPIFMMSDSGARGNASNFTQLAGMRGLMANPSGRIIELPIKSSFREGLTVLEYFISTHGARKGLADTALKTADSGYLTRRLVDVAQDVIVREDDCGTDRGLLIGAIKEGNEVIESLYDRLVGRFARKTVKHPETGEVLIRENELITEDIARAIENAGVETVHIRSAFTCNTRHGVCKKCYGRNLATGTDVEVGEAVGIIAAQSIGEPGTQLTMRTFHTGGVAGDDITQGLPRIQEIFEARNPKGQAVISEIDGVVVTINDVKDRQEVVVQGAVETRTYAIPYGARLKVTPGQEISHGQELTEGSIDPKELLKVTDITAVQEYLLREVQKVYRMQGVEIGDKHVEVMVRQMLRKVRVIDAGDTDVLPGTLLDIHQFTDANVKVLLEGKQPATARPVLLGITKASLETDSFLSAASFQETTRVLTDAAIKGKRDELLGLKENVIIGKLVPAGTGMNRYRKVDLVKTVQDDTNVENDEIYVEQ</sequence>
<comment type="function">
    <text evidence="1">DNA-dependent RNA polymerase catalyzes the transcription of DNA into RNA using the four ribonucleoside triphosphates as substrates.</text>
</comment>
<comment type="catalytic activity">
    <reaction evidence="1">
        <text>RNA(n) + a ribonucleoside 5'-triphosphate = RNA(n+1) + diphosphate</text>
        <dbReference type="Rhea" id="RHEA:21248"/>
        <dbReference type="Rhea" id="RHEA-COMP:14527"/>
        <dbReference type="Rhea" id="RHEA-COMP:17342"/>
        <dbReference type="ChEBI" id="CHEBI:33019"/>
        <dbReference type="ChEBI" id="CHEBI:61557"/>
        <dbReference type="ChEBI" id="CHEBI:140395"/>
        <dbReference type="EC" id="2.7.7.6"/>
    </reaction>
</comment>
<comment type="cofactor">
    <cofactor evidence="1">
        <name>Mg(2+)</name>
        <dbReference type="ChEBI" id="CHEBI:18420"/>
    </cofactor>
    <text evidence="1">Binds 1 Mg(2+) ion per subunit.</text>
</comment>
<comment type="cofactor">
    <cofactor evidence="1">
        <name>Zn(2+)</name>
        <dbReference type="ChEBI" id="CHEBI:29105"/>
    </cofactor>
    <text evidence="1">Binds 2 Zn(2+) ions per subunit.</text>
</comment>
<comment type="subunit">
    <text evidence="1">The RNAP catalytic core consists of 2 alpha, 1 beta, 1 beta' and 1 omega subunit. When a sigma factor is associated with the core the holoenzyme is formed, which can initiate transcription.</text>
</comment>
<comment type="similarity">
    <text evidence="1">Belongs to the RNA polymerase beta' chain family.</text>
</comment>
<name>RPOC_BACCN</name>
<accession>A7GK13</accession>
<protein>
    <recommendedName>
        <fullName evidence="1">DNA-directed RNA polymerase subunit beta'</fullName>
        <shortName evidence="1">RNAP subunit beta'</shortName>
        <ecNumber evidence="1">2.7.7.6</ecNumber>
    </recommendedName>
    <alternativeName>
        <fullName evidence="1">RNA polymerase subunit beta'</fullName>
    </alternativeName>
    <alternativeName>
        <fullName evidence="1">Transcriptase subunit beta'</fullName>
    </alternativeName>
</protein>
<organism>
    <name type="scientific">Bacillus cytotoxicus (strain DSM 22905 / CIP 110041 / 391-98 / NVH 391-98)</name>
    <dbReference type="NCBI Taxonomy" id="315749"/>
    <lineage>
        <taxon>Bacteria</taxon>
        <taxon>Bacillati</taxon>
        <taxon>Bacillota</taxon>
        <taxon>Bacilli</taxon>
        <taxon>Bacillales</taxon>
        <taxon>Bacillaceae</taxon>
        <taxon>Bacillus</taxon>
        <taxon>Bacillus cereus group</taxon>
    </lineage>
</organism>
<evidence type="ECO:0000255" key="1">
    <source>
        <dbReference type="HAMAP-Rule" id="MF_01322"/>
    </source>
</evidence>
<gene>
    <name evidence="1" type="primary">rpoC</name>
    <name type="ordered locus">Bcer98_0097</name>
</gene>